<sequence>MAELTISANDIQSAIEEYVGSFTSDTSREEVGTVVDAGDGIAHVEGLPSVMTQELLEFPGGVLGVALNLDEHSVGAVILGNSENIEEGQQVKRTGEVLSVPVGDAFLGRVINPLGQPIDGRGDIKAETRRALELQAPSVVQRQSVKEPLQTGIKAIDAMTPIGRGQRQLIIGDRKTGKTAVCVDTILNQRQNWETGDPKKQVRCVYVAVGQKGTTIASVRRALEEGGAMDYTTIVAAPASDSAGFKWLAPYTGSAVAQHWMYDGKHVLIVFDDLTKQAEAYRAISLLLRRPPGREAYPGDVFYLHSRLLERCAKLSDELGGGSLTGLPIIETKANDISAYIPTNVISITDGQCFLETDLFNQGVRPAINVGVSVSRVGGAAQIKAIKEVAGSLRLDLSQYRELEAFAAFASDLDATSKAQLDRGARLVELLKQPQYQPMPVEEQVISIFLGTGGHLDSVPVEDVRRFETELLDHIRASEENLLSTIRDTQKLTEETEEALTKVINHFKKGFASSTGESVVPDEHVEAMDEEDLGKESVKVKKPAPQKKK</sequence>
<keyword id="KW-0066">ATP synthesis</keyword>
<keyword id="KW-0067">ATP-binding</keyword>
<keyword id="KW-1003">Cell membrane</keyword>
<keyword id="KW-0139">CF(1)</keyword>
<keyword id="KW-0375">Hydrogen ion transport</keyword>
<keyword id="KW-0406">Ion transport</keyword>
<keyword id="KW-0472">Membrane</keyword>
<keyword id="KW-0547">Nucleotide-binding</keyword>
<keyword id="KW-1278">Translocase</keyword>
<keyword id="KW-0813">Transport</keyword>
<reference key="1">
    <citation type="journal article" date="2007" name="Genome Res.">
        <title>Reductive evolution and niche adaptation inferred from the genome of Mycobacterium ulcerans, the causative agent of Buruli ulcer.</title>
        <authorList>
            <person name="Stinear T.P."/>
            <person name="Seemann T."/>
            <person name="Pidot S."/>
            <person name="Frigui W."/>
            <person name="Reysset G."/>
            <person name="Garnier T."/>
            <person name="Meurice G."/>
            <person name="Simon D."/>
            <person name="Bouchier C."/>
            <person name="Ma L."/>
            <person name="Tichit M."/>
            <person name="Porter J.L."/>
            <person name="Ryan J."/>
            <person name="Johnson P.D.R."/>
            <person name="Davies J.K."/>
            <person name="Jenkin G.A."/>
            <person name="Small P.L.C."/>
            <person name="Jones L.M."/>
            <person name="Tekaia F."/>
            <person name="Laval F."/>
            <person name="Daffe M."/>
            <person name="Parkhill J."/>
            <person name="Cole S.T."/>
        </authorList>
    </citation>
    <scope>NUCLEOTIDE SEQUENCE [LARGE SCALE GENOMIC DNA]</scope>
    <source>
        <strain>Agy99</strain>
    </source>
</reference>
<accession>A0PUK2</accession>
<feature type="chain" id="PRO_0000302674" description="ATP synthase subunit alpha">
    <location>
        <begin position="1"/>
        <end position="549"/>
    </location>
</feature>
<feature type="region of interest" description="Disordered" evidence="2">
    <location>
        <begin position="513"/>
        <end position="549"/>
    </location>
</feature>
<feature type="compositionally biased region" description="Basic residues" evidence="2">
    <location>
        <begin position="540"/>
        <end position="549"/>
    </location>
</feature>
<feature type="binding site" evidence="1">
    <location>
        <begin position="172"/>
        <end position="179"/>
    </location>
    <ligand>
        <name>ATP</name>
        <dbReference type="ChEBI" id="CHEBI:30616"/>
    </ligand>
</feature>
<feature type="site" description="Required for activity" evidence="1">
    <location>
        <position position="373"/>
    </location>
</feature>
<organism>
    <name type="scientific">Mycobacterium ulcerans (strain Agy99)</name>
    <dbReference type="NCBI Taxonomy" id="362242"/>
    <lineage>
        <taxon>Bacteria</taxon>
        <taxon>Bacillati</taxon>
        <taxon>Actinomycetota</taxon>
        <taxon>Actinomycetes</taxon>
        <taxon>Mycobacteriales</taxon>
        <taxon>Mycobacteriaceae</taxon>
        <taxon>Mycobacterium</taxon>
        <taxon>Mycobacterium ulcerans group</taxon>
    </lineage>
</organism>
<proteinExistence type="inferred from homology"/>
<protein>
    <recommendedName>
        <fullName evidence="1">ATP synthase subunit alpha</fullName>
        <ecNumber evidence="1">7.1.2.2</ecNumber>
    </recommendedName>
    <alternativeName>
        <fullName evidence="1">ATP synthase F1 sector subunit alpha</fullName>
    </alternativeName>
    <alternativeName>
        <fullName evidence="1">F-ATPase subunit alpha</fullName>
    </alternativeName>
</protein>
<gene>
    <name evidence="1" type="primary">atpA</name>
    <name type="ordered locus">MUL_3956</name>
</gene>
<name>ATPA_MYCUA</name>
<dbReference type="EC" id="7.1.2.2" evidence="1"/>
<dbReference type="EMBL" id="CP000325">
    <property type="protein sequence ID" value="ABL06021.1"/>
    <property type="molecule type" value="Genomic_DNA"/>
</dbReference>
<dbReference type="RefSeq" id="WP_011741626.1">
    <property type="nucleotide sequence ID" value="NC_008611.1"/>
</dbReference>
<dbReference type="SMR" id="A0PUK2"/>
<dbReference type="KEGG" id="mul:MUL_3956"/>
<dbReference type="eggNOG" id="COG0056">
    <property type="taxonomic scope" value="Bacteria"/>
</dbReference>
<dbReference type="HOGENOM" id="CLU_010091_2_1_11"/>
<dbReference type="Proteomes" id="UP000000765">
    <property type="component" value="Chromosome"/>
</dbReference>
<dbReference type="GO" id="GO:0005886">
    <property type="term" value="C:plasma membrane"/>
    <property type="evidence" value="ECO:0007669"/>
    <property type="project" value="UniProtKB-SubCell"/>
</dbReference>
<dbReference type="GO" id="GO:0045259">
    <property type="term" value="C:proton-transporting ATP synthase complex"/>
    <property type="evidence" value="ECO:0007669"/>
    <property type="project" value="UniProtKB-KW"/>
</dbReference>
<dbReference type="GO" id="GO:0043531">
    <property type="term" value="F:ADP binding"/>
    <property type="evidence" value="ECO:0007669"/>
    <property type="project" value="TreeGrafter"/>
</dbReference>
<dbReference type="GO" id="GO:0005524">
    <property type="term" value="F:ATP binding"/>
    <property type="evidence" value="ECO:0007669"/>
    <property type="project" value="UniProtKB-UniRule"/>
</dbReference>
<dbReference type="GO" id="GO:0046933">
    <property type="term" value="F:proton-transporting ATP synthase activity, rotational mechanism"/>
    <property type="evidence" value="ECO:0007669"/>
    <property type="project" value="UniProtKB-UniRule"/>
</dbReference>
<dbReference type="CDD" id="cd18113">
    <property type="entry name" value="ATP-synt_F1_alpha_C"/>
    <property type="match status" value="1"/>
</dbReference>
<dbReference type="CDD" id="cd18116">
    <property type="entry name" value="ATP-synt_F1_alpha_N"/>
    <property type="match status" value="1"/>
</dbReference>
<dbReference type="CDD" id="cd01132">
    <property type="entry name" value="F1-ATPase_alpha_CD"/>
    <property type="match status" value="1"/>
</dbReference>
<dbReference type="FunFam" id="1.20.150.20:FF:000001">
    <property type="entry name" value="ATP synthase subunit alpha"/>
    <property type="match status" value="1"/>
</dbReference>
<dbReference type="FunFam" id="2.40.30.20:FF:000001">
    <property type="entry name" value="ATP synthase subunit alpha"/>
    <property type="match status" value="1"/>
</dbReference>
<dbReference type="FunFam" id="3.40.50.300:FF:000002">
    <property type="entry name" value="ATP synthase subunit alpha"/>
    <property type="match status" value="1"/>
</dbReference>
<dbReference type="Gene3D" id="2.40.30.20">
    <property type="match status" value="1"/>
</dbReference>
<dbReference type="Gene3D" id="1.20.150.20">
    <property type="entry name" value="ATP synthase alpha/beta chain, C-terminal domain"/>
    <property type="match status" value="1"/>
</dbReference>
<dbReference type="Gene3D" id="3.40.50.300">
    <property type="entry name" value="P-loop containing nucleotide triphosphate hydrolases"/>
    <property type="match status" value="1"/>
</dbReference>
<dbReference type="HAMAP" id="MF_01346">
    <property type="entry name" value="ATP_synth_alpha_bact"/>
    <property type="match status" value="1"/>
</dbReference>
<dbReference type="InterPro" id="IPR023366">
    <property type="entry name" value="ATP_synth_asu-like_sf"/>
</dbReference>
<dbReference type="InterPro" id="IPR000793">
    <property type="entry name" value="ATP_synth_asu_C"/>
</dbReference>
<dbReference type="InterPro" id="IPR038376">
    <property type="entry name" value="ATP_synth_asu_C_sf"/>
</dbReference>
<dbReference type="InterPro" id="IPR033732">
    <property type="entry name" value="ATP_synth_F1_a_nt-bd_dom"/>
</dbReference>
<dbReference type="InterPro" id="IPR005294">
    <property type="entry name" value="ATP_synth_F1_asu"/>
</dbReference>
<dbReference type="InterPro" id="IPR020003">
    <property type="entry name" value="ATPase_a/bsu_AS"/>
</dbReference>
<dbReference type="InterPro" id="IPR004100">
    <property type="entry name" value="ATPase_F1/V1/A1_a/bsu_N"/>
</dbReference>
<dbReference type="InterPro" id="IPR036121">
    <property type="entry name" value="ATPase_F1/V1/A1_a/bsu_N_sf"/>
</dbReference>
<dbReference type="InterPro" id="IPR000194">
    <property type="entry name" value="ATPase_F1/V1/A1_a/bsu_nucl-bd"/>
</dbReference>
<dbReference type="InterPro" id="IPR027417">
    <property type="entry name" value="P-loop_NTPase"/>
</dbReference>
<dbReference type="NCBIfam" id="TIGR00962">
    <property type="entry name" value="atpA"/>
    <property type="match status" value="1"/>
</dbReference>
<dbReference type="NCBIfam" id="NF009884">
    <property type="entry name" value="PRK13343.1"/>
    <property type="match status" value="1"/>
</dbReference>
<dbReference type="PANTHER" id="PTHR48082">
    <property type="entry name" value="ATP SYNTHASE SUBUNIT ALPHA, MITOCHONDRIAL"/>
    <property type="match status" value="1"/>
</dbReference>
<dbReference type="PANTHER" id="PTHR48082:SF2">
    <property type="entry name" value="ATP SYNTHASE SUBUNIT ALPHA, MITOCHONDRIAL"/>
    <property type="match status" value="1"/>
</dbReference>
<dbReference type="Pfam" id="PF00006">
    <property type="entry name" value="ATP-synt_ab"/>
    <property type="match status" value="1"/>
</dbReference>
<dbReference type="Pfam" id="PF00306">
    <property type="entry name" value="ATP-synt_ab_C"/>
    <property type="match status" value="1"/>
</dbReference>
<dbReference type="Pfam" id="PF02874">
    <property type="entry name" value="ATP-synt_ab_N"/>
    <property type="match status" value="1"/>
</dbReference>
<dbReference type="PIRSF" id="PIRSF039088">
    <property type="entry name" value="F_ATPase_subunit_alpha"/>
    <property type="match status" value="1"/>
</dbReference>
<dbReference type="SUPFAM" id="SSF47917">
    <property type="entry name" value="C-terminal domain of alpha and beta subunits of F1 ATP synthase"/>
    <property type="match status" value="1"/>
</dbReference>
<dbReference type="SUPFAM" id="SSF50615">
    <property type="entry name" value="N-terminal domain of alpha and beta subunits of F1 ATP synthase"/>
    <property type="match status" value="1"/>
</dbReference>
<dbReference type="SUPFAM" id="SSF52540">
    <property type="entry name" value="P-loop containing nucleoside triphosphate hydrolases"/>
    <property type="match status" value="1"/>
</dbReference>
<dbReference type="PROSITE" id="PS00152">
    <property type="entry name" value="ATPASE_ALPHA_BETA"/>
    <property type="match status" value="1"/>
</dbReference>
<evidence type="ECO:0000255" key="1">
    <source>
        <dbReference type="HAMAP-Rule" id="MF_01346"/>
    </source>
</evidence>
<evidence type="ECO:0000256" key="2">
    <source>
        <dbReference type="SAM" id="MobiDB-lite"/>
    </source>
</evidence>
<comment type="function">
    <text evidence="1">Produces ATP from ADP in the presence of a proton gradient across the membrane. The alpha chain is a regulatory subunit.</text>
</comment>
<comment type="catalytic activity">
    <reaction evidence="1">
        <text>ATP + H2O + 4 H(+)(in) = ADP + phosphate + 5 H(+)(out)</text>
        <dbReference type="Rhea" id="RHEA:57720"/>
        <dbReference type="ChEBI" id="CHEBI:15377"/>
        <dbReference type="ChEBI" id="CHEBI:15378"/>
        <dbReference type="ChEBI" id="CHEBI:30616"/>
        <dbReference type="ChEBI" id="CHEBI:43474"/>
        <dbReference type="ChEBI" id="CHEBI:456216"/>
        <dbReference type="EC" id="7.1.2.2"/>
    </reaction>
</comment>
<comment type="subunit">
    <text evidence="1">F-type ATPases have 2 components, CF(1) - the catalytic core - and CF(0) - the membrane proton channel. CF(1) has five subunits: alpha(3), beta(3), gamma(1), delta(1), epsilon(1). CF(0) has three main subunits: a(1), b(2) and c(9-12). The alpha and beta chains form an alternating ring which encloses part of the gamma chain. CF(1) is attached to CF(0) by a central stalk formed by the gamma and epsilon chains, while a peripheral stalk is formed by the delta and b chains.</text>
</comment>
<comment type="subcellular location">
    <subcellularLocation>
        <location evidence="1">Cell membrane</location>
        <topology evidence="1">Peripheral membrane protein</topology>
    </subcellularLocation>
</comment>
<comment type="similarity">
    <text evidence="1">Belongs to the ATPase alpha/beta chains family.</text>
</comment>